<dbReference type="EC" id="3.4.21.88" evidence="1"/>
<dbReference type="EMBL" id="CP000423">
    <property type="protein sequence ID" value="ABJ69567.1"/>
    <property type="molecule type" value="Genomic_DNA"/>
</dbReference>
<dbReference type="RefSeq" id="WP_003563873.1">
    <property type="nucleotide sequence ID" value="NC_008526.1"/>
</dbReference>
<dbReference type="RefSeq" id="YP_806009.1">
    <property type="nucleotide sequence ID" value="NC_008526.1"/>
</dbReference>
<dbReference type="SMR" id="Q03B55"/>
<dbReference type="STRING" id="321967.LSEI_0730"/>
<dbReference type="MEROPS" id="S24.001"/>
<dbReference type="PaxDb" id="321967-LSEI_0730"/>
<dbReference type="GeneID" id="57089348"/>
<dbReference type="KEGG" id="lca:LSEI_0730"/>
<dbReference type="PATRIC" id="fig|321967.11.peg.731"/>
<dbReference type="HOGENOM" id="CLU_066192_45_1_9"/>
<dbReference type="Proteomes" id="UP000001651">
    <property type="component" value="Chromosome"/>
</dbReference>
<dbReference type="GO" id="GO:0003677">
    <property type="term" value="F:DNA binding"/>
    <property type="evidence" value="ECO:0007669"/>
    <property type="project" value="UniProtKB-UniRule"/>
</dbReference>
<dbReference type="GO" id="GO:0004252">
    <property type="term" value="F:serine-type endopeptidase activity"/>
    <property type="evidence" value="ECO:0007669"/>
    <property type="project" value="UniProtKB-UniRule"/>
</dbReference>
<dbReference type="GO" id="GO:0006281">
    <property type="term" value="P:DNA repair"/>
    <property type="evidence" value="ECO:0007669"/>
    <property type="project" value="UniProtKB-UniRule"/>
</dbReference>
<dbReference type="GO" id="GO:0006260">
    <property type="term" value="P:DNA replication"/>
    <property type="evidence" value="ECO:0007669"/>
    <property type="project" value="UniProtKB-UniRule"/>
</dbReference>
<dbReference type="GO" id="GO:0045892">
    <property type="term" value="P:negative regulation of DNA-templated transcription"/>
    <property type="evidence" value="ECO:0007669"/>
    <property type="project" value="UniProtKB-UniRule"/>
</dbReference>
<dbReference type="GO" id="GO:0006508">
    <property type="term" value="P:proteolysis"/>
    <property type="evidence" value="ECO:0007669"/>
    <property type="project" value="InterPro"/>
</dbReference>
<dbReference type="GO" id="GO:0009432">
    <property type="term" value="P:SOS response"/>
    <property type="evidence" value="ECO:0007669"/>
    <property type="project" value="UniProtKB-UniRule"/>
</dbReference>
<dbReference type="CDD" id="cd06529">
    <property type="entry name" value="S24_LexA-like"/>
    <property type="match status" value="1"/>
</dbReference>
<dbReference type="FunFam" id="2.10.109.10:FF:000001">
    <property type="entry name" value="LexA repressor"/>
    <property type="match status" value="1"/>
</dbReference>
<dbReference type="Gene3D" id="2.10.109.10">
    <property type="entry name" value="Umud Fragment, subunit A"/>
    <property type="match status" value="1"/>
</dbReference>
<dbReference type="Gene3D" id="1.10.10.10">
    <property type="entry name" value="Winged helix-like DNA-binding domain superfamily/Winged helix DNA-binding domain"/>
    <property type="match status" value="1"/>
</dbReference>
<dbReference type="HAMAP" id="MF_00015">
    <property type="entry name" value="LexA"/>
    <property type="match status" value="1"/>
</dbReference>
<dbReference type="InterPro" id="IPR006200">
    <property type="entry name" value="LexA"/>
</dbReference>
<dbReference type="InterPro" id="IPR039418">
    <property type="entry name" value="LexA-like"/>
</dbReference>
<dbReference type="InterPro" id="IPR036286">
    <property type="entry name" value="LexA/Signal_pep-like_sf"/>
</dbReference>
<dbReference type="InterPro" id="IPR006199">
    <property type="entry name" value="LexA_DNA-bd_dom"/>
</dbReference>
<dbReference type="InterPro" id="IPR050077">
    <property type="entry name" value="LexA_repressor"/>
</dbReference>
<dbReference type="InterPro" id="IPR006197">
    <property type="entry name" value="Peptidase_S24_LexA"/>
</dbReference>
<dbReference type="InterPro" id="IPR015927">
    <property type="entry name" value="Peptidase_S24_S26A/B/C"/>
</dbReference>
<dbReference type="InterPro" id="IPR036388">
    <property type="entry name" value="WH-like_DNA-bd_sf"/>
</dbReference>
<dbReference type="InterPro" id="IPR036390">
    <property type="entry name" value="WH_DNA-bd_sf"/>
</dbReference>
<dbReference type="NCBIfam" id="TIGR00498">
    <property type="entry name" value="lexA"/>
    <property type="match status" value="1"/>
</dbReference>
<dbReference type="PANTHER" id="PTHR33516">
    <property type="entry name" value="LEXA REPRESSOR"/>
    <property type="match status" value="1"/>
</dbReference>
<dbReference type="PANTHER" id="PTHR33516:SF2">
    <property type="entry name" value="LEXA REPRESSOR-RELATED"/>
    <property type="match status" value="1"/>
</dbReference>
<dbReference type="Pfam" id="PF01726">
    <property type="entry name" value="LexA_DNA_bind"/>
    <property type="match status" value="1"/>
</dbReference>
<dbReference type="Pfam" id="PF00717">
    <property type="entry name" value="Peptidase_S24"/>
    <property type="match status" value="1"/>
</dbReference>
<dbReference type="PRINTS" id="PR00726">
    <property type="entry name" value="LEXASERPTASE"/>
</dbReference>
<dbReference type="SUPFAM" id="SSF51306">
    <property type="entry name" value="LexA/Signal peptidase"/>
    <property type="match status" value="1"/>
</dbReference>
<dbReference type="SUPFAM" id="SSF46785">
    <property type="entry name" value="Winged helix' DNA-binding domain"/>
    <property type="match status" value="1"/>
</dbReference>
<keyword id="KW-0068">Autocatalytic cleavage</keyword>
<keyword id="KW-0227">DNA damage</keyword>
<keyword id="KW-0234">DNA repair</keyword>
<keyword id="KW-0235">DNA replication</keyword>
<keyword id="KW-0238">DNA-binding</keyword>
<keyword id="KW-0378">Hydrolase</keyword>
<keyword id="KW-1185">Reference proteome</keyword>
<keyword id="KW-0678">Repressor</keyword>
<keyword id="KW-0742">SOS response</keyword>
<keyword id="KW-0804">Transcription</keyword>
<keyword id="KW-0805">Transcription regulation</keyword>
<protein>
    <recommendedName>
        <fullName evidence="1">LexA repressor</fullName>
        <ecNumber evidence="1">3.4.21.88</ecNumber>
    </recommendedName>
</protein>
<gene>
    <name evidence="1" type="primary">lexA</name>
    <name type="ordered locus">LSEI_0730</name>
</gene>
<organism>
    <name type="scientific">Lacticaseibacillus paracasei (strain ATCC 334 / BCRC 17002 / CCUG 31169 / CIP 107868 / KCTC 3260 / NRRL B-441)</name>
    <name type="common">Lactobacillus paracasei</name>
    <dbReference type="NCBI Taxonomy" id="321967"/>
    <lineage>
        <taxon>Bacteria</taxon>
        <taxon>Bacillati</taxon>
        <taxon>Bacillota</taxon>
        <taxon>Bacilli</taxon>
        <taxon>Lactobacillales</taxon>
        <taxon>Lactobacillaceae</taxon>
        <taxon>Lacticaseibacillus</taxon>
    </lineage>
</organism>
<reference key="1">
    <citation type="journal article" date="2006" name="Proc. Natl. Acad. Sci. U.S.A.">
        <title>Comparative genomics of the lactic acid bacteria.</title>
        <authorList>
            <person name="Makarova K.S."/>
            <person name="Slesarev A."/>
            <person name="Wolf Y.I."/>
            <person name="Sorokin A."/>
            <person name="Mirkin B."/>
            <person name="Koonin E.V."/>
            <person name="Pavlov A."/>
            <person name="Pavlova N."/>
            <person name="Karamychev V."/>
            <person name="Polouchine N."/>
            <person name="Shakhova V."/>
            <person name="Grigoriev I."/>
            <person name="Lou Y."/>
            <person name="Rohksar D."/>
            <person name="Lucas S."/>
            <person name="Huang K."/>
            <person name="Goodstein D.M."/>
            <person name="Hawkins T."/>
            <person name="Plengvidhya V."/>
            <person name="Welker D."/>
            <person name="Hughes J."/>
            <person name="Goh Y."/>
            <person name="Benson A."/>
            <person name="Baldwin K."/>
            <person name="Lee J.-H."/>
            <person name="Diaz-Muniz I."/>
            <person name="Dosti B."/>
            <person name="Smeianov V."/>
            <person name="Wechter W."/>
            <person name="Barabote R."/>
            <person name="Lorca G."/>
            <person name="Altermann E."/>
            <person name="Barrangou R."/>
            <person name="Ganesan B."/>
            <person name="Xie Y."/>
            <person name="Rawsthorne H."/>
            <person name="Tamir D."/>
            <person name="Parker C."/>
            <person name="Breidt F."/>
            <person name="Broadbent J.R."/>
            <person name="Hutkins R."/>
            <person name="O'Sullivan D."/>
            <person name="Steele J."/>
            <person name="Unlu G."/>
            <person name="Saier M.H. Jr."/>
            <person name="Klaenhammer T."/>
            <person name="Richardson P."/>
            <person name="Kozyavkin S."/>
            <person name="Weimer B.C."/>
            <person name="Mills D.A."/>
        </authorList>
    </citation>
    <scope>NUCLEOTIDE SEQUENCE [LARGE SCALE GENOMIC DNA]</scope>
    <source>
        <strain>ATCC 334 / BCRC 17002 / CCUG 31169 / CIP 107868 / KCTC 3260 / NRRL B-441</strain>
    </source>
</reference>
<feature type="chain" id="PRO_0000322736" description="LexA repressor">
    <location>
        <begin position="1"/>
        <end position="208"/>
    </location>
</feature>
<feature type="DNA-binding region" description="H-T-H motif" evidence="1">
    <location>
        <begin position="30"/>
        <end position="50"/>
    </location>
</feature>
<feature type="active site" description="For autocatalytic cleavage activity" evidence="1">
    <location>
        <position position="129"/>
    </location>
</feature>
<feature type="active site" description="For autocatalytic cleavage activity" evidence="1">
    <location>
        <position position="167"/>
    </location>
</feature>
<feature type="site" description="Cleavage; by autolysis" evidence="1">
    <location>
        <begin position="93"/>
        <end position="94"/>
    </location>
</feature>
<evidence type="ECO:0000255" key="1">
    <source>
        <dbReference type="HAMAP-Rule" id="MF_00015"/>
    </source>
</evidence>
<comment type="function">
    <text evidence="1">Represses a number of genes involved in the response to DNA damage (SOS response), including recA and lexA. In the presence of single-stranded DNA, RecA interacts with LexA causing an autocatalytic cleavage which disrupts the DNA-binding part of LexA, leading to derepression of the SOS regulon and eventually DNA repair.</text>
</comment>
<comment type="catalytic activity">
    <reaction evidence="1">
        <text>Hydrolysis of Ala-|-Gly bond in repressor LexA.</text>
        <dbReference type="EC" id="3.4.21.88"/>
    </reaction>
</comment>
<comment type="subunit">
    <text evidence="1">Homodimer.</text>
</comment>
<comment type="similarity">
    <text evidence="1">Belongs to the peptidase S24 family.</text>
</comment>
<sequence>MPTQASQKRWKQILQSIYDAIEDHGYPPTVREIGKSVGLSSSSTVAAYLEKLLAAGLIAKDPAKPRTLEVTSAGRDFIGVQDHGIPIVGTVAAGVPITAIENIDDYFPVPDDLPYAADELFMLRVQGNSMIKIGILDGDQIIVKKQNDAENGQIVVAMTEEDEATVKRFYKEKNGIRLHPENDSMDDMFFPDVTILGIVVSLYRPALV</sequence>
<name>LEXA_LACP3</name>
<accession>Q03B55</accession>
<proteinExistence type="inferred from homology"/>